<gene>
    <name type="primary">rpmG2</name>
    <name type="ordered locus">MYPU_1800</name>
</gene>
<accession>Q98R30</accession>
<name>RL332_MYCPU</name>
<keyword id="KW-1185">Reference proteome</keyword>
<keyword id="KW-0687">Ribonucleoprotein</keyword>
<keyword id="KW-0689">Ribosomal protein</keyword>
<protein>
    <recommendedName>
        <fullName evidence="1">Large ribosomal subunit protein bL33B</fullName>
    </recommendedName>
    <alternativeName>
        <fullName>50S ribosomal protein L33 2</fullName>
    </alternativeName>
</protein>
<evidence type="ECO:0000255" key="1">
    <source>
        <dbReference type="HAMAP-Rule" id="MF_00294"/>
    </source>
</evidence>
<evidence type="ECO:0000305" key="2"/>
<reference key="1">
    <citation type="journal article" date="2001" name="Nucleic Acids Res.">
        <title>The complete genome sequence of the murine respiratory pathogen Mycoplasma pulmonis.</title>
        <authorList>
            <person name="Chambaud I."/>
            <person name="Heilig R."/>
            <person name="Ferris S."/>
            <person name="Barbe V."/>
            <person name="Samson D."/>
            <person name="Galisson F."/>
            <person name="Moszer I."/>
            <person name="Dybvig K."/>
            <person name="Wroblewski H."/>
            <person name="Viari A."/>
            <person name="Rocha E.P.C."/>
            <person name="Blanchard A."/>
        </authorList>
    </citation>
    <scope>NUCLEOTIDE SEQUENCE [LARGE SCALE GENOMIC DNA]</scope>
    <source>
        <strain>UAB CTIP</strain>
    </source>
</reference>
<dbReference type="EMBL" id="AL445563">
    <property type="protein sequence ID" value="CAC13353.1"/>
    <property type="molecule type" value="Genomic_DNA"/>
</dbReference>
<dbReference type="PIR" id="D90534">
    <property type="entry name" value="D90534"/>
</dbReference>
<dbReference type="RefSeq" id="WP_010924984.1">
    <property type="nucleotide sequence ID" value="NC_002771.1"/>
</dbReference>
<dbReference type="SMR" id="Q98R30"/>
<dbReference type="STRING" id="272635.gene:17576765"/>
<dbReference type="KEGG" id="mpu:MYPU_1800"/>
<dbReference type="HOGENOM" id="CLU_190949_0_1_14"/>
<dbReference type="Proteomes" id="UP000000528">
    <property type="component" value="Chromosome"/>
</dbReference>
<dbReference type="GO" id="GO:0005737">
    <property type="term" value="C:cytoplasm"/>
    <property type="evidence" value="ECO:0007669"/>
    <property type="project" value="UniProtKB-ARBA"/>
</dbReference>
<dbReference type="GO" id="GO:1990904">
    <property type="term" value="C:ribonucleoprotein complex"/>
    <property type="evidence" value="ECO:0007669"/>
    <property type="project" value="UniProtKB-KW"/>
</dbReference>
<dbReference type="GO" id="GO:0005840">
    <property type="term" value="C:ribosome"/>
    <property type="evidence" value="ECO:0007669"/>
    <property type="project" value="UniProtKB-KW"/>
</dbReference>
<dbReference type="GO" id="GO:0003735">
    <property type="term" value="F:structural constituent of ribosome"/>
    <property type="evidence" value="ECO:0007669"/>
    <property type="project" value="InterPro"/>
</dbReference>
<dbReference type="GO" id="GO:0006412">
    <property type="term" value="P:translation"/>
    <property type="evidence" value="ECO:0007669"/>
    <property type="project" value="UniProtKB-UniRule"/>
</dbReference>
<dbReference type="Gene3D" id="2.20.28.120">
    <property type="entry name" value="Ribosomal protein L33"/>
    <property type="match status" value="1"/>
</dbReference>
<dbReference type="HAMAP" id="MF_00294">
    <property type="entry name" value="Ribosomal_bL33"/>
    <property type="match status" value="1"/>
</dbReference>
<dbReference type="InterPro" id="IPR001705">
    <property type="entry name" value="Ribosomal_bL33"/>
</dbReference>
<dbReference type="InterPro" id="IPR038584">
    <property type="entry name" value="Ribosomal_bL33_sf"/>
</dbReference>
<dbReference type="InterPro" id="IPR011332">
    <property type="entry name" value="Ribosomal_zn-bd"/>
</dbReference>
<dbReference type="NCBIfam" id="NF001764">
    <property type="entry name" value="PRK00504.1"/>
    <property type="match status" value="1"/>
</dbReference>
<dbReference type="NCBIfam" id="TIGR01023">
    <property type="entry name" value="rpmG_bact"/>
    <property type="match status" value="1"/>
</dbReference>
<dbReference type="Pfam" id="PF00471">
    <property type="entry name" value="Ribosomal_L33"/>
    <property type="match status" value="1"/>
</dbReference>
<dbReference type="SUPFAM" id="SSF57829">
    <property type="entry name" value="Zn-binding ribosomal proteins"/>
    <property type="match status" value="1"/>
</dbReference>
<sequence length="46" mass="5527">MKSKIALSCEKCKIKNYKTNKSIIERLELKKFCSRCKEHTIHKEEK</sequence>
<comment type="similarity">
    <text evidence="2">Belongs to the bacterial ribosomal protein bL33 family.</text>
</comment>
<feature type="chain" id="PRO_0000170193" description="Large ribosomal subunit protein bL33B">
    <location>
        <begin position="1"/>
        <end position="46"/>
    </location>
</feature>
<organism>
    <name type="scientific">Mycoplasmopsis pulmonis (strain UAB CTIP)</name>
    <name type="common">Mycoplasma pulmonis</name>
    <dbReference type="NCBI Taxonomy" id="272635"/>
    <lineage>
        <taxon>Bacteria</taxon>
        <taxon>Bacillati</taxon>
        <taxon>Mycoplasmatota</taxon>
        <taxon>Mycoplasmoidales</taxon>
        <taxon>Metamycoplasmataceae</taxon>
        <taxon>Mycoplasmopsis</taxon>
    </lineage>
</organism>
<proteinExistence type="inferred from homology"/>